<name>MURC_VIBVY</name>
<accession>Q7MNV0</accession>
<reference key="1">
    <citation type="journal article" date="2003" name="Genome Res.">
        <title>Comparative genome analysis of Vibrio vulnificus, a marine pathogen.</title>
        <authorList>
            <person name="Chen C.-Y."/>
            <person name="Wu K.-M."/>
            <person name="Chang Y.-C."/>
            <person name="Chang C.-H."/>
            <person name="Tsai H.-C."/>
            <person name="Liao T.-L."/>
            <person name="Liu Y.-M."/>
            <person name="Chen H.-J."/>
            <person name="Shen A.B.-T."/>
            <person name="Li J.-C."/>
            <person name="Su T.-L."/>
            <person name="Shao C.-P."/>
            <person name="Lee C.-T."/>
            <person name="Hor L.-I."/>
            <person name="Tsai S.-F."/>
        </authorList>
    </citation>
    <scope>NUCLEOTIDE SEQUENCE [LARGE SCALE GENOMIC DNA]</scope>
    <source>
        <strain>YJ016</strain>
    </source>
</reference>
<evidence type="ECO:0000255" key="1">
    <source>
        <dbReference type="HAMAP-Rule" id="MF_00046"/>
    </source>
</evidence>
<protein>
    <recommendedName>
        <fullName evidence="1">UDP-N-acetylmuramate--L-alanine ligase</fullName>
        <ecNumber evidence="1">6.3.2.8</ecNumber>
    </recommendedName>
    <alternativeName>
        <fullName evidence="1">UDP-N-acetylmuramoyl-L-alanine synthetase</fullName>
    </alternativeName>
</protein>
<dbReference type="EC" id="6.3.2.8" evidence="1"/>
<dbReference type="EMBL" id="BA000037">
    <property type="protein sequence ID" value="BAC93379.1"/>
    <property type="molecule type" value="Genomic_DNA"/>
</dbReference>
<dbReference type="RefSeq" id="WP_011149504.1">
    <property type="nucleotide sequence ID" value="NC_005139.1"/>
</dbReference>
<dbReference type="SMR" id="Q7MNV0"/>
<dbReference type="STRING" id="672.VV93_v1c05580"/>
<dbReference type="KEGG" id="vvy:VV0615"/>
<dbReference type="PATRIC" id="fig|196600.6.peg.634"/>
<dbReference type="eggNOG" id="COG0773">
    <property type="taxonomic scope" value="Bacteria"/>
</dbReference>
<dbReference type="HOGENOM" id="CLU_028104_2_2_6"/>
<dbReference type="UniPathway" id="UPA00219"/>
<dbReference type="Proteomes" id="UP000002675">
    <property type="component" value="Chromosome I"/>
</dbReference>
<dbReference type="GO" id="GO:0005737">
    <property type="term" value="C:cytoplasm"/>
    <property type="evidence" value="ECO:0007669"/>
    <property type="project" value="UniProtKB-SubCell"/>
</dbReference>
<dbReference type="GO" id="GO:0005524">
    <property type="term" value="F:ATP binding"/>
    <property type="evidence" value="ECO:0007669"/>
    <property type="project" value="UniProtKB-UniRule"/>
</dbReference>
<dbReference type="GO" id="GO:0008763">
    <property type="term" value="F:UDP-N-acetylmuramate-L-alanine ligase activity"/>
    <property type="evidence" value="ECO:0007669"/>
    <property type="project" value="UniProtKB-UniRule"/>
</dbReference>
<dbReference type="GO" id="GO:0051301">
    <property type="term" value="P:cell division"/>
    <property type="evidence" value="ECO:0007669"/>
    <property type="project" value="UniProtKB-KW"/>
</dbReference>
<dbReference type="GO" id="GO:0071555">
    <property type="term" value="P:cell wall organization"/>
    <property type="evidence" value="ECO:0007669"/>
    <property type="project" value="UniProtKB-KW"/>
</dbReference>
<dbReference type="GO" id="GO:0009252">
    <property type="term" value="P:peptidoglycan biosynthetic process"/>
    <property type="evidence" value="ECO:0007669"/>
    <property type="project" value="UniProtKB-UniRule"/>
</dbReference>
<dbReference type="GO" id="GO:0008360">
    <property type="term" value="P:regulation of cell shape"/>
    <property type="evidence" value="ECO:0007669"/>
    <property type="project" value="UniProtKB-KW"/>
</dbReference>
<dbReference type="FunFam" id="3.40.1190.10:FF:000001">
    <property type="entry name" value="UDP-N-acetylmuramate--L-alanine ligase"/>
    <property type="match status" value="1"/>
</dbReference>
<dbReference type="FunFam" id="3.40.50.720:FF:000046">
    <property type="entry name" value="UDP-N-acetylmuramate--L-alanine ligase"/>
    <property type="match status" value="1"/>
</dbReference>
<dbReference type="Gene3D" id="3.90.190.20">
    <property type="entry name" value="Mur ligase, C-terminal domain"/>
    <property type="match status" value="1"/>
</dbReference>
<dbReference type="Gene3D" id="3.40.1190.10">
    <property type="entry name" value="Mur-like, catalytic domain"/>
    <property type="match status" value="1"/>
</dbReference>
<dbReference type="Gene3D" id="3.40.50.720">
    <property type="entry name" value="NAD(P)-binding Rossmann-like Domain"/>
    <property type="match status" value="1"/>
</dbReference>
<dbReference type="HAMAP" id="MF_00046">
    <property type="entry name" value="MurC"/>
    <property type="match status" value="1"/>
</dbReference>
<dbReference type="InterPro" id="IPR036565">
    <property type="entry name" value="Mur-like_cat_sf"/>
</dbReference>
<dbReference type="InterPro" id="IPR004101">
    <property type="entry name" value="Mur_ligase_C"/>
</dbReference>
<dbReference type="InterPro" id="IPR036615">
    <property type="entry name" value="Mur_ligase_C_dom_sf"/>
</dbReference>
<dbReference type="InterPro" id="IPR013221">
    <property type="entry name" value="Mur_ligase_cen"/>
</dbReference>
<dbReference type="InterPro" id="IPR000713">
    <property type="entry name" value="Mur_ligase_N"/>
</dbReference>
<dbReference type="InterPro" id="IPR050061">
    <property type="entry name" value="MurCDEF_pg_biosynth"/>
</dbReference>
<dbReference type="InterPro" id="IPR005758">
    <property type="entry name" value="UDP-N-AcMur_Ala_ligase_MurC"/>
</dbReference>
<dbReference type="NCBIfam" id="TIGR01082">
    <property type="entry name" value="murC"/>
    <property type="match status" value="1"/>
</dbReference>
<dbReference type="PANTHER" id="PTHR43445:SF3">
    <property type="entry name" value="UDP-N-ACETYLMURAMATE--L-ALANINE LIGASE"/>
    <property type="match status" value="1"/>
</dbReference>
<dbReference type="PANTHER" id="PTHR43445">
    <property type="entry name" value="UDP-N-ACETYLMURAMATE--L-ALANINE LIGASE-RELATED"/>
    <property type="match status" value="1"/>
</dbReference>
<dbReference type="Pfam" id="PF01225">
    <property type="entry name" value="Mur_ligase"/>
    <property type="match status" value="1"/>
</dbReference>
<dbReference type="Pfam" id="PF02875">
    <property type="entry name" value="Mur_ligase_C"/>
    <property type="match status" value="1"/>
</dbReference>
<dbReference type="Pfam" id="PF08245">
    <property type="entry name" value="Mur_ligase_M"/>
    <property type="match status" value="1"/>
</dbReference>
<dbReference type="SUPFAM" id="SSF51984">
    <property type="entry name" value="MurCD N-terminal domain"/>
    <property type="match status" value="1"/>
</dbReference>
<dbReference type="SUPFAM" id="SSF53623">
    <property type="entry name" value="MurD-like peptide ligases, catalytic domain"/>
    <property type="match status" value="1"/>
</dbReference>
<dbReference type="SUPFAM" id="SSF53244">
    <property type="entry name" value="MurD-like peptide ligases, peptide-binding domain"/>
    <property type="match status" value="1"/>
</dbReference>
<gene>
    <name evidence="1" type="primary">murC</name>
    <name type="ordered locus">VV0615</name>
</gene>
<keyword id="KW-0067">ATP-binding</keyword>
<keyword id="KW-0131">Cell cycle</keyword>
<keyword id="KW-0132">Cell division</keyword>
<keyword id="KW-0133">Cell shape</keyword>
<keyword id="KW-0961">Cell wall biogenesis/degradation</keyword>
<keyword id="KW-0963">Cytoplasm</keyword>
<keyword id="KW-0436">Ligase</keyword>
<keyword id="KW-0547">Nucleotide-binding</keyword>
<keyword id="KW-0573">Peptidoglycan synthesis</keyword>
<sequence length="486" mass="52950">MTIQHKQDLAQIRAMVPEMRRVKSIHFIGIGGAGMSGIAEVLLNEGYQITGSDIAENAVTERLAQKGAKVYIGHQATNVAEASVVVVSTAINEANPEVKAAREARIPVVRRAEMLAELMRFRHGIAVAGTHGKTTTTALVTQIYSEAGLDPTFVNGGLVKSAGTNARLGSSRILIAEADESDASFLHLQPMVCIVTNIEADHMDTYGGDFETLKQTFIDFLHNLPFYGQAIVCIDDPVIRELIPRISRQVITYGFSEDADVRIENYHQEGQQGKFTVVRKDCEALDITLNIPGRHNALNAAAAIAVATEDEIGDDAILAAMIGTQGTGRRFEHLGEFETGNGNVMLVDDYGHHPTEVDVTIHAARNGWQDKRLVMIFQPHRYSRTRDLYDDFANVLEQVDVLVMLDVYAAGEKAIAGADSRSLCRTIRSRGKIDPIFVADTQQLPEVLANILQEGDLLLAQGAGDIGKVARQLAALELNISNMKAK</sequence>
<comment type="function">
    <text evidence="1">Cell wall formation.</text>
</comment>
<comment type="catalytic activity">
    <reaction evidence="1">
        <text>UDP-N-acetyl-alpha-D-muramate + L-alanine + ATP = UDP-N-acetyl-alpha-D-muramoyl-L-alanine + ADP + phosphate + H(+)</text>
        <dbReference type="Rhea" id="RHEA:23372"/>
        <dbReference type="ChEBI" id="CHEBI:15378"/>
        <dbReference type="ChEBI" id="CHEBI:30616"/>
        <dbReference type="ChEBI" id="CHEBI:43474"/>
        <dbReference type="ChEBI" id="CHEBI:57972"/>
        <dbReference type="ChEBI" id="CHEBI:70757"/>
        <dbReference type="ChEBI" id="CHEBI:83898"/>
        <dbReference type="ChEBI" id="CHEBI:456216"/>
        <dbReference type="EC" id="6.3.2.8"/>
    </reaction>
</comment>
<comment type="pathway">
    <text evidence="1">Cell wall biogenesis; peptidoglycan biosynthesis.</text>
</comment>
<comment type="subcellular location">
    <subcellularLocation>
        <location evidence="1">Cytoplasm</location>
    </subcellularLocation>
</comment>
<comment type="similarity">
    <text evidence="1">Belongs to the MurCDEF family.</text>
</comment>
<proteinExistence type="inferred from homology"/>
<feature type="chain" id="PRO_0000182183" description="UDP-N-acetylmuramate--L-alanine ligase">
    <location>
        <begin position="1"/>
        <end position="486"/>
    </location>
</feature>
<feature type="binding site" evidence="1">
    <location>
        <begin position="129"/>
        <end position="135"/>
    </location>
    <ligand>
        <name>ATP</name>
        <dbReference type="ChEBI" id="CHEBI:30616"/>
    </ligand>
</feature>
<organism>
    <name type="scientific">Vibrio vulnificus (strain YJ016)</name>
    <dbReference type="NCBI Taxonomy" id="196600"/>
    <lineage>
        <taxon>Bacteria</taxon>
        <taxon>Pseudomonadati</taxon>
        <taxon>Pseudomonadota</taxon>
        <taxon>Gammaproteobacteria</taxon>
        <taxon>Vibrionales</taxon>
        <taxon>Vibrionaceae</taxon>
        <taxon>Vibrio</taxon>
    </lineage>
</organism>